<dbReference type="EMBL" id="AK097948">
    <property type="protein sequence ID" value="BAC05202.1"/>
    <property type="molecule type" value="mRNA"/>
</dbReference>
<dbReference type="EMBL" id="AK292530">
    <property type="protein sequence ID" value="BAF85219.1"/>
    <property type="molecule type" value="mRNA"/>
</dbReference>
<dbReference type="EMBL" id="AK302875">
    <property type="protein sequence ID" value="BAG64055.1"/>
    <property type="molecule type" value="mRNA"/>
</dbReference>
<dbReference type="EMBL" id="AK316241">
    <property type="protein sequence ID" value="BAH14612.1"/>
    <property type="molecule type" value="mRNA"/>
</dbReference>
<dbReference type="EMBL" id="AC079922">
    <property type="protein sequence ID" value="AAY14923.1"/>
    <property type="molecule type" value="Genomic_DNA"/>
</dbReference>
<dbReference type="EMBL" id="AC112235">
    <property type="protein sequence ID" value="AAX93053.1"/>
    <property type="status" value="ALT_SEQ"/>
    <property type="molecule type" value="Genomic_DNA"/>
</dbReference>
<dbReference type="EMBL" id="BC036217">
    <property type="protein sequence ID" value="AAH36217.1"/>
    <property type="molecule type" value="mRNA"/>
</dbReference>
<dbReference type="CCDS" id="CCDS2100.1">
    <molecule id="Q8IYA6-1"/>
</dbReference>
<dbReference type="RefSeq" id="NP_001291290.1">
    <molecule id="Q8IYA6-3"/>
    <property type="nucleotide sequence ID" value="NM_001304361.2"/>
</dbReference>
<dbReference type="RefSeq" id="NP_689728.3">
    <molecule id="Q8IYA6-1"/>
    <property type="nucleotide sequence ID" value="NM_152515.4"/>
</dbReference>
<dbReference type="RefSeq" id="XP_011508968.1">
    <molecule id="Q8IYA6-3"/>
    <property type="nucleotide sequence ID" value="XM_011510666.3"/>
</dbReference>
<dbReference type="SMR" id="Q8IYA6"/>
<dbReference type="BioGRID" id="127298">
    <property type="interactions" value="27"/>
</dbReference>
<dbReference type="FunCoup" id="Q8IYA6">
    <property type="interactions" value="543"/>
</dbReference>
<dbReference type="IntAct" id="Q8IYA6">
    <property type="interactions" value="13"/>
</dbReference>
<dbReference type="STRING" id="9606.ENSP00000305204"/>
<dbReference type="GlyCosmos" id="Q8IYA6">
    <property type="glycosylation" value="3 sites, 1 glycan"/>
</dbReference>
<dbReference type="GlyGen" id="Q8IYA6">
    <property type="glycosylation" value="7 sites, 1 N-linked glycan (1 site), 1 O-linked glycan (4 sites)"/>
</dbReference>
<dbReference type="iPTMnet" id="Q8IYA6"/>
<dbReference type="PhosphoSitePlus" id="Q8IYA6"/>
<dbReference type="BioMuta" id="CKAP2L"/>
<dbReference type="DMDM" id="311033474"/>
<dbReference type="jPOST" id="Q8IYA6"/>
<dbReference type="MassIVE" id="Q8IYA6"/>
<dbReference type="PaxDb" id="9606-ENSP00000305204"/>
<dbReference type="PeptideAtlas" id="Q8IYA6"/>
<dbReference type="ProteomicsDB" id="25385"/>
<dbReference type="ProteomicsDB" id="71132">
    <molecule id="Q8IYA6-1"/>
</dbReference>
<dbReference type="ProteomicsDB" id="71133">
    <molecule id="Q8IYA6-2"/>
</dbReference>
<dbReference type="Pumba" id="Q8IYA6"/>
<dbReference type="Antibodypedia" id="33290">
    <property type="antibodies" value="71 antibodies from 15 providers"/>
</dbReference>
<dbReference type="DNASU" id="150468"/>
<dbReference type="Ensembl" id="ENST00000302450.11">
    <molecule id="Q8IYA6-1"/>
    <property type="protein sequence ID" value="ENSP00000305204.6"/>
    <property type="gene ID" value="ENSG00000169607.13"/>
</dbReference>
<dbReference type="GeneID" id="150468"/>
<dbReference type="KEGG" id="hsa:150468"/>
<dbReference type="MANE-Select" id="ENST00000302450.11">
    <property type="protein sequence ID" value="ENSP00000305204.6"/>
    <property type="RefSeq nucleotide sequence ID" value="NM_152515.5"/>
    <property type="RefSeq protein sequence ID" value="NP_689728.3"/>
</dbReference>
<dbReference type="UCSC" id="uc002tie.3">
    <molecule id="Q8IYA6-1"/>
    <property type="organism name" value="human"/>
</dbReference>
<dbReference type="AGR" id="HGNC:26877"/>
<dbReference type="CTD" id="150468"/>
<dbReference type="DisGeNET" id="150468"/>
<dbReference type="GeneCards" id="CKAP2L"/>
<dbReference type="HGNC" id="HGNC:26877">
    <property type="gene designation" value="CKAP2L"/>
</dbReference>
<dbReference type="HPA" id="ENSG00000169607">
    <property type="expression patterns" value="Group enriched (bone marrow, lymphoid tissue, testis)"/>
</dbReference>
<dbReference type="MalaCards" id="CKAP2L"/>
<dbReference type="MIM" id="272440">
    <property type="type" value="phenotype"/>
</dbReference>
<dbReference type="MIM" id="616174">
    <property type="type" value="gene"/>
</dbReference>
<dbReference type="neXtProt" id="NX_Q8IYA6"/>
<dbReference type="OpenTargets" id="ENSG00000169607"/>
<dbReference type="Orphanet" id="3255">
    <property type="disease" value="Filippi syndrome"/>
</dbReference>
<dbReference type="PharmGKB" id="PA144596448"/>
<dbReference type="VEuPathDB" id="HostDB:ENSG00000169607"/>
<dbReference type="eggNOG" id="ENOG502RZUT">
    <property type="taxonomic scope" value="Eukaryota"/>
</dbReference>
<dbReference type="GeneTree" id="ENSGT00530000063691"/>
<dbReference type="HOGENOM" id="CLU_022701_0_0_1"/>
<dbReference type="InParanoid" id="Q8IYA6"/>
<dbReference type="OMA" id="QKSTQPC"/>
<dbReference type="OrthoDB" id="6288182at2759"/>
<dbReference type="PAN-GO" id="Q8IYA6">
    <property type="GO annotations" value="3 GO annotations based on evolutionary models"/>
</dbReference>
<dbReference type="PhylomeDB" id="Q8IYA6"/>
<dbReference type="TreeFam" id="TF333003"/>
<dbReference type="PathwayCommons" id="Q8IYA6"/>
<dbReference type="SignaLink" id="Q8IYA6"/>
<dbReference type="BioGRID-ORCS" id="150468">
    <property type="hits" value="36 hits in 1155 CRISPR screens"/>
</dbReference>
<dbReference type="ChiTaRS" id="CKAP2L">
    <property type="organism name" value="human"/>
</dbReference>
<dbReference type="GenomeRNAi" id="150468"/>
<dbReference type="Pharos" id="Q8IYA6">
    <property type="development level" value="Tbio"/>
</dbReference>
<dbReference type="PRO" id="PR:Q8IYA6"/>
<dbReference type="Proteomes" id="UP000005640">
    <property type="component" value="Chromosome 2"/>
</dbReference>
<dbReference type="RNAct" id="Q8IYA6">
    <property type="molecule type" value="protein"/>
</dbReference>
<dbReference type="Bgee" id="ENSG00000169607">
    <property type="expression patterns" value="Expressed in ventricular zone and 117 other cell types or tissues"/>
</dbReference>
<dbReference type="ExpressionAtlas" id="Q8IYA6">
    <property type="expression patterns" value="baseline and differential"/>
</dbReference>
<dbReference type="GO" id="GO:0005813">
    <property type="term" value="C:centrosome"/>
    <property type="evidence" value="ECO:0000314"/>
    <property type="project" value="UniProtKB"/>
</dbReference>
<dbReference type="GO" id="GO:0005929">
    <property type="term" value="C:cilium"/>
    <property type="evidence" value="ECO:0000314"/>
    <property type="project" value="HPA"/>
</dbReference>
<dbReference type="GO" id="GO:0005829">
    <property type="term" value="C:cytosol"/>
    <property type="evidence" value="ECO:0000314"/>
    <property type="project" value="HPA"/>
</dbReference>
<dbReference type="GO" id="GO:0015630">
    <property type="term" value="C:microtubule cytoskeleton"/>
    <property type="evidence" value="ECO:0000314"/>
    <property type="project" value="HPA"/>
</dbReference>
<dbReference type="GO" id="GO:0072686">
    <property type="term" value="C:mitotic spindle"/>
    <property type="evidence" value="ECO:0000314"/>
    <property type="project" value="HPA"/>
</dbReference>
<dbReference type="GO" id="GO:0000922">
    <property type="term" value="C:spindle pole"/>
    <property type="evidence" value="ECO:0007669"/>
    <property type="project" value="UniProtKB-SubCell"/>
</dbReference>
<dbReference type="InterPro" id="IPR052855">
    <property type="entry name" value="CKAP2-like"/>
</dbReference>
<dbReference type="InterPro" id="IPR029197">
    <property type="entry name" value="CKAP2_C"/>
</dbReference>
<dbReference type="PANTHER" id="PTHR47078">
    <property type="entry name" value="CYTOSKELETON-ASSOCIATED PROTEIN 2-LIKE"/>
    <property type="match status" value="1"/>
</dbReference>
<dbReference type="PANTHER" id="PTHR47078:SF1">
    <property type="entry name" value="CYTOSKELETON-ASSOCIATED PROTEIN 2-LIKE"/>
    <property type="match status" value="1"/>
</dbReference>
<dbReference type="Pfam" id="PF15297">
    <property type="entry name" value="CKAP2_C"/>
    <property type="match status" value="2"/>
</dbReference>
<gene>
    <name type="primary">CKAP2L</name>
</gene>
<name>CKP2L_HUMAN</name>
<proteinExistence type="evidence at protein level"/>
<protein>
    <recommendedName>
        <fullName>Cytoskeleton-associated protein 2-like</fullName>
    </recommendedName>
    <alternativeName>
        <fullName>Radial fiber and mitotic spindle protein</fullName>
        <shortName>Radmis</shortName>
    </alternativeName>
</protein>
<organism>
    <name type="scientific">Homo sapiens</name>
    <name type="common">Human</name>
    <dbReference type="NCBI Taxonomy" id="9606"/>
    <lineage>
        <taxon>Eukaryota</taxon>
        <taxon>Metazoa</taxon>
        <taxon>Chordata</taxon>
        <taxon>Craniata</taxon>
        <taxon>Vertebrata</taxon>
        <taxon>Euteleostomi</taxon>
        <taxon>Mammalia</taxon>
        <taxon>Eutheria</taxon>
        <taxon>Euarchontoglires</taxon>
        <taxon>Primates</taxon>
        <taxon>Haplorrhini</taxon>
        <taxon>Catarrhini</taxon>
        <taxon>Hominidae</taxon>
        <taxon>Homo</taxon>
    </lineage>
</organism>
<comment type="function">
    <text evidence="7">Microtubule-associated protein required for mitotic spindle formation and cell-cycle progression in neural progenitor cells.</text>
</comment>
<comment type="subcellular location">
    <subcellularLocation>
        <location evidence="7">Cytoplasm</location>
        <location evidence="7">Cytoskeleton</location>
        <location evidence="7">Spindle pole</location>
    </subcellularLocation>
    <text evidence="7">Uniformly distributed along each microtubule bundle of spindles in addition to centrioles during mitosis, expression promptly diminishes at interphase.</text>
</comment>
<comment type="alternative products">
    <event type="alternative splicing"/>
    <isoform>
        <id>Q8IYA6-1</id>
        <name>1</name>
        <sequence type="displayed"/>
    </isoform>
    <isoform>
        <id>Q8IYA6-2</id>
        <name>2</name>
        <sequence type="described" ref="VSP_032219 VSP_032220"/>
    </isoform>
    <isoform>
        <id>Q8IYA6-3</id>
        <name>3</name>
        <sequence type="described" ref="VSP_053717"/>
    </isoform>
</comment>
<comment type="induction">
    <text evidence="7">Expression is cell-cycle dependent. Undetectable in interphase and prophase, strong expression at the spindle pole throughout metaphase to telophase.</text>
</comment>
<comment type="domain">
    <text evidence="1">The KEN box is required for the association with the APC/C-Cdh1 complex, ubiquitination and degradation.</text>
</comment>
<comment type="PTM">
    <text evidence="1">Ubiquitinated by the anaphase promoting complex/cyclosome (APC/C).</text>
</comment>
<comment type="disease" evidence="7">
    <disease id="DI-04307">
        <name>Filippi syndrome</name>
        <acronym>FLPIS</acronym>
        <description>A rare disorder characterized by microcephaly, pre- and postnatal growth failure, syndactyly, and distinctive facial features, including a broad nasal bridge and underdeveloped alae nasi. Some affected individuals have intellectual disability, seizures, undescended testicles in males, and teeth and hair abnormalities.</description>
        <dbReference type="MIM" id="272440"/>
    </disease>
    <text>The disease is caused by variants affecting the gene represented in this entry.</text>
</comment>
<comment type="similarity">
    <text evidence="9">Belongs to the CKAP2 family.</text>
</comment>
<comment type="sequence caution" evidence="9">
    <conflict type="erroneous gene model prediction">
        <sequence resource="EMBL-CDS" id="AAX93053"/>
    </conflict>
</comment>
<accession>Q8IYA6</accession>
<accession>A8K915</accession>
<accession>B4DZE3</accession>
<accession>B7ZAC6</accession>
<accession>F5H0M5</accession>
<accession>Q53QF8</accession>
<accession>Q53RS8</accession>
<accession>Q8N1J8</accession>
<sequence>MVGPGPTAAAAVEERQRKLQEYLAAKGKLKSQNTKPYLKSKNNCQNQPPSKSTIRPKNDVTNHVVLPVKPKRSISIKLQPRPPNTAGSQKPKLEPPKLLGKRLTSECVSSNPYSKPSSKSFQQCEAGSSTTGELSRKPVGSLNIEQLKTTKQQLTDQGNGKCIDFMNNIHVENESLDNFLKETNKENLLDILTEPERKPDPKLYTRSKPKTDSYNQTKNSLVPKQALGKSSVNSAVLKDRVNKQFVGETQSRTFPVKSQQLSRGADLARPGVKPSRTVPSHFIRTLSKVQSSKKPVVKNIKDIKVNRSQYERPNETKIRSYPVTEQRVKHTKPRTYPSLLQGEYNNRHPNIKQDQKSSQVCIPQTSCVLQKSKAISQRPNLTVGRFNSAIPSTPSIRPNGTSGNKHNNNGFQQKAQTLDSKLKKAVPQNHFLNKTAPKTQADVTTVNGTQTNPNIKKKATAEDRRKQLEEWQKSKGKTYKRPPMELKTKRKVIKEMNISFWKSIEKEEEEKKAQLELSSKINNTLTECLNLIEGGVPSNEILNILSSIPEAEKFAKFWICKAKLLASKGTFDVIGLYEEAIKNGATPIQELRKVVLNILQDSNRTTEGITSDSLVAETSITSVEELAKKMESVKSCLSPKEREQVTATPRIAKAEQHNYPGIKLQIGPIPRINGMPEVQDMKFITPVRRSSRIERAVSRYPEMLQEHDLVVASLDELLEVEETKCFIFRRNEALPVTLGFQTPES</sequence>
<reference key="1">
    <citation type="journal article" date="2004" name="Nat. Genet.">
        <title>Complete sequencing and characterization of 21,243 full-length human cDNAs.</title>
        <authorList>
            <person name="Ota T."/>
            <person name="Suzuki Y."/>
            <person name="Nishikawa T."/>
            <person name="Otsuki T."/>
            <person name="Sugiyama T."/>
            <person name="Irie R."/>
            <person name="Wakamatsu A."/>
            <person name="Hayashi K."/>
            <person name="Sato H."/>
            <person name="Nagai K."/>
            <person name="Kimura K."/>
            <person name="Makita H."/>
            <person name="Sekine M."/>
            <person name="Obayashi M."/>
            <person name="Nishi T."/>
            <person name="Shibahara T."/>
            <person name="Tanaka T."/>
            <person name="Ishii S."/>
            <person name="Yamamoto J."/>
            <person name="Saito K."/>
            <person name="Kawai Y."/>
            <person name="Isono Y."/>
            <person name="Nakamura Y."/>
            <person name="Nagahari K."/>
            <person name="Murakami K."/>
            <person name="Yasuda T."/>
            <person name="Iwayanagi T."/>
            <person name="Wagatsuma M."/>
            <person name="Shiratori A."/>
            <person name="Sudo H."/>
            <person name="Hosoiri T."/>
            <person name="Kaku Y."/>
            <person name="Kodaira H."/>
            <person name="Kondo H."/>
            <person name="Sugawara M."/>
            <person name="Takahashi M."/>
            <person name="Kanda K."/>
            <person name="Yokoi T."/>
            <person name="Furuya T."/>
            <person name="Kikkawa E."/>
            <person name="Omura Y."/>
            <person name="Abe K."/>
            <person name="Kamihara K."/>
            <person name="Katsuta N."/>
            <person name="Sato K."/>
            <person name="Tanikawa M."/>
            <person name="Yamazaki M."/>
            <person name="Ninomiya K."/>
            <person name="Ishibashi T."/>
            <person name="Yamashita H."/>
            <person name="Murakawa K."/>
            <person name="Fujimori K."/>
            <person name="Tanai H."/>
            <person name="Kimata M."/>
            <person name="Watanabe M."/>
            <person name="Hiraoka S."/>
            <person name="Chiba Y."/>
            <person name="Ishida S."/>
            <person name="Ono Y."/>
            <person name="Takiguchi S."/>
            <person name="Watanabe S."/>
            <person name="Yosida M."/>
            <person name="Hotuta T."/>
            <person name="Kusano J."/>
            <person name="Kanehori K."/>
            <person name="Takahashi-Fujii A."/>
            <person name="Hara H."/>
            <person name="Tanase T.-O."/>
            <person name="Nomura Y."/>
            <person name="Togiya S."/>
            <person name="Komai F."/>
            <person name="Hara R."/>
            <person name="Takeuchi K."/>
            <person name="Arita M."/>
            <person name="Imose N."/>
            <person name="Musashino K."/>
            <person name="Yuuki H."/>
            <person name="Oshima A."/>
            <person name="Sasaki N."/>
            <person name="Aotsuka S."/>
            <person name="Yoshikawa Y."/>
            <person name="Matsunawa H."/>
            <person name="Ichihara T."/>
            <person name="Shiohata N."/>
            <person name="Sano S."/>
            <person name="Moriya S."/>
            <person name="Momiyama H."/>
            <person name="Satoh N."/>
            <person name="Takami S."/>
            <person name="Terashima Y."/>
            <person name="Suzuki O."/>
            <person name="Nakagawa S."/>
            <person name="Senoh A."/>
            <person name="Mizoguchi H."/>
            <person name="Goto Y."/>
            <person name="Shimizu F."/>
            <person name="Wakebe H."/>
            <person name="Hishigaki H."/>
            <person name="Watanabe T."/>
            <person name="Sugiyama A."/>
            <person name="Takemoto M."/>
            <person name="Kawakami B."/>
            <person name="Yamazaki M."/>
            <person name="Watanabe K."/>
            <person name="Kumagai A."/>
            <person name="Itakura S."/>
            <person name="Fukuzumi Y."/>
            <person name="Fujimori Y."/>
            <person name="Komiyama M."/>
            <person name="Tashiro H."/>
            <person name="Tanigami A."/>
            <person name="Fujiwara T."/>
            <person name="Ono T."/>
            <person name="Yamada K."/>
            <person name="Fujii Y."/>
            <person name="Ozaki K."/>
            <person name="Hirao M."/>
            <person name="Ohmori Y."/>
            <person name="Kawabata A."/>
            <person name="Hikiji T."/>
            <person name="Kobatake N."/>
            <person name="Inagaki H."/>
            <person name="Ikema Y."/>
            <person name="Okamoto S."/>
            <person name="Okitani R."/>
            <person name="Kawakami T."/>
            <person name="Noguchi S."/>
            <person name="Itoh T."/>
            <person name="Shigeta K."/>
            <person name="Senba T."/>
            <person name="Matsumura K."/>
            <person name="Nakajima Y."/>
            <person name="Mizuno T."/>
            <person name="Morinaga M."/>
            <person name="Sasaki M."/>
            <person name="Togashi T."/>
            <person name="Oyama M."/>
            <person name="Hata H."/>
            <person name="Watanabe M."/>
            <person name="Komatsu T."/>
            <person name="Mizushima-Sugano J."/>
            <person name="Satoh T."/>
            <person name="Shirai Y."/>
            <person name="Takahashi Y."/>
            <person name="Nakagawa K."/>
            <person name="Okumura K."/>
            <person name="Nagase T."/>
            <person name="Nomura N."/>
            <person name="Kikuchi H."/>
            <person name="Masuho Y."/>
            <person name="Yamashita R."/>
            <person name="Nakai K."/>
            <person name="Yada T."/>
            <person name="Nakamura Y."/>
            <person name="Ohara O."/>
            <person name="Isogai T."/>
            <person name="Sugano S."/>
        </authorList>
    </citation>
    <scope>NUCLEOTIDE SEQUENCE [LARGE SCALE MRNA] (ISOFORMS 1; 2 AND 3)</scope>
    <scope>VARIANT VAL-375</scope>
    <source>
        <tissue>Testis</tissue>
        <tissue>Thymus</tissue>
    </source>
</reference>
<reference key="2">
    <citation type="journal article" date="2005" name="Nature">
        <title>Generation and annotation of the DNA sequences of human chromosomes 2 and 4.</title>
        <authorList>
            <person name="Hillier L.W."/>
            <person name="Graves T.A."/>
            <person name="Fulton R.S."/>
            <person name="Fulton L.A."/>
            <person name="Pepin K.H."/>
            <person name="Minx P."/>
            <person name="Wagner-McPherson C."/>
            <person name="Layman D."/>
            <person name="Wylie K."/>
            <person name="Sekhon M."/>
            <person name="Becker M.C."/>
            <person name="Fewell G.A."/>
            <person name="Delehaunty K.D."/>
            <person name="Miner T.L."/>
            <person name="Nash W.E."/>
            <person name="Kremitzki C."/>
            <person name="Oddy L."/>
            <person name="Du H."/>
            <person name="Sun H."/>
            <person name="Bradshaw-Cordum H."/>
            <person name="Ali J."/>
            <person name="Carter J."/>
            <person name="Cordes M."/>
            <person name="Harris A."/>
            <person name="Isak A."/>
            <person name="van Brunt A."/>
            <person name="Nguyen C."/>
            <person name="Du F."/>
            <person name="Courtney L."/>
            <person name="Kalicki J."/>
            <person name="Ozersky P."/>
            <person name="Abbott S."/>
            <person name="Armstrong J."/>
            <person name="Belter E.A."/>
            <person name="Caruso L."/>
            <person name="Cedroni M."/>
            <person name="Cotton M."/>
            <person name="Davidson T."/>
            <person name="Desai A."/>
            <person name="Elliott G."/>
            <person name="Erb T."/>
            <person name="Fronick C."/>
            <person name="Gaige T."/>
            <person name="Haakenson W."/>
            <person name="Haglund K."/>
            <person name="Holmes A."/>
            <person name="Harkins R."/>
            <person name="Kim K."/>
            <person name="Kruchowski S.S."/>
            <person name="Strong C.M."/>
            <person name="Grewal N."/>
            <person name="Goyea E."/>
            <person name="Hou S."/>
            <person name="Levy A."/>
            <person name="Martinka S."/>
            <person name="Mead K."/>
            <person name="McLellan M.D."/>
            <person name="Meyer R."/>
            <person name="Randall-Maher J."/>
            <person name="Tomlinson C."/>
            <person name="Dauphin-Kohlberg S."/>
            <person name="Kozlowicz-Reilly A."/>
            <person name="Shah N."/>
            <person name="Swearengen-Shahid S."/>
            <person name="Snider J."/>
            <person name="Strong J.T."/>
            <person name="Thompson J."/>
            <person name="Yoakum M."/>
            <person name="Leonard S."/>
            <person name="Pearman C."/>
            <person name="Trani L."/>
            <person name="Radionenko M."/>
            <person name="Waligorski J.E."/>
            <person name="Wang C."/>
            <person name="Rock S.M."/>
            <person name="Tin-Wollam A.-M."/>
            <person name="Maupin R."/>
            <person name="Latreille P."/>
            <person name="Wendl M.C."/>
            <person name="Yang S.-P."/>
            <person name="Pohl C."/>
            <person name="Wallis J.W."/>
            <person name="Spieth J."/>
            <person name="Bieri T.A."/>
            <person name="Berkowicz N."/>
            <person name="Nelson J.O."/>
            <person name="Osborne J."/>
            <person name="Ding L."/>
            <person name="Meyer R."/>
            <person name="Sabo A."/>
            <person name="Shotland Y."/>
            <person name="Sinha P."/>
            <person name="Wohldmann P.E."/>
            <person name="Cook L.L."/>
            <person name="Hickenbotham M.T."/>
            <person name="Eldred J."/>
            <person name="Williams D."/>
            <person name="Jones T.A."/>
            <person name="She X."/>
            <person name="Ciccarelli F.D."/>
            <person name="Izaurralde E."/>
            <person name="Taylor J."/>
            <person name="Schmutz J."/>
            <person name="Myers R.M."/>
            <person name="Cox D.R."/>
            <person name="Huang X."/>
            <person name="McPherson J.D."/>
            <person name="Mardis E.R."/>
            <person name="Clifton S.W."/>
            <person name="Warren W.C."/>
            <person name="Chinwalla A.T."/>
            <person name="Eddy S.R."/>
            <person name="Marra M.A."/>
            <person name="Ovcharenko I."/>
            <person name="Furey T.S."/>
            <person name="Miller W."/>
            <person name="Eichler E.E."/>
            <person name="Bork P."/>
            <person name="Suyama M."/>
            <person name="Torrents D."/>
            <person name="Waterston R.H."/>
            <person name="Wilson R.K."/>
        </authorList>
    </citation>
    <scope>NUCLEOTIDE SEQUENCE [LARGE SCALE GENOMIC DNA]</scope>
    <scope>VARIANTS SER-62 AND SER-263</scope>
</reference>
<reference key="3">
    <citation type="journal article" date="2004" name="Genome Res.">
        <title>The status, quality, and expansion of the NIH full-length cDNA project: the Mammalian Gene Collection (MGC).</title>
        <authorList>
            <consortium name="The MGC Project Team"/>
        </authorList>
    </citation>
    <scope>NUCLEOTIDE SEQUENCE [LARGE SCALE MRNA] (ISOFORM 1)</scope>
    <scope>VARIANT VAL-375</scope>
    <source>
        <tissue>Testis</tissue>
    </source>
</reference>
<reference key="4">
    <citation type="journal article" date="2008" name="Proc. Natl. Acad. Sci. U.S.A.">
        <title>A quantitative atlas of mitotic phosphorylation.</title>
        <authorList>
            <person name="Dephoure N."/>
            <person name="Zhou C."/>
            <person name="Villen J."/>
            <person name="Beausoleil S.A."/>
            <person name="Bakalarski C.E."/>
            <person name="Elledge S.J."/>
            <person name="Gygi S.P."/>
        </authorList>
    </citation>
    <scope>PHOSPHORYLATION [LARGE SCALE ANALYSIS] AT THR-742 AND SER-745</scope>
    <scope>IDENTIFICATION BY MASS SPECTROMETRY [LARGE SCALE ANALYSIS]</scope>
    <source>
        <tissue>Cervix carcinoma</tissue>
    </source>
</reference>
<reference key="5">
    <citation type="journal article" date="2010" name="J. Biol. Chem.">
        <title>In vivo identification of sumoylation sites by a signature tag and cysteine-targeted affinity purification.</title>
        <authorList>
            <person name="Blomster H.A."/>
            <person name="Imanishi S.Y."/>
            <person name="Siimes J."/>
            <person name="Kastu J."/>
            <person name="Morrice N.A."/>
            <person name="Eriksson J.E."/>
            <person name="Sistonen L."/>
        </authorList>
    </citation>
    <scope>SUMOYLATION AT LYS-198</scope>
    <scope>PHOSPHORYLATION AT TYR-204</scope>
    <scope>MUTAGENESIS OF LYS-198</scope>
    <source>
        <tissue>Cervix carcinoma</tissue>
    </source>
</reference>
<reference key="6">
    <citation type="journal article" date="2010" name="Sci. Signal.">
        <title>Quantitative phosphoproteomics reveals widespread full phosphorylation site occupancy during mitosis.</title>
        <authorList>
            <person name="Olsen J.V."/>
            <person name="Vermeulen M."/>
            <person name="Santamaria A."/>
            <person name="Kumar C."/>
            <person name="Miller M.L."/>
            <person name="Jensen L.J."/>
            <person name="Gnad F."/>
            <person name="Cox J."/>
            <person name="Jensen T.S."/>
            <person name="Nigg E.A."/>
            <person name="Brunak S."/>
            <person name="Mann M."/>
        </authorList>
    </citation>
    <scope>PHOSPHORYLATION [LARGE SCALE ANALYSIS] AT SER-745</scope>
    <scope>IDENTIFICATION BY MASS SPECTROMETRY [LARGE SCALE ANALYSIS]</scope>
    <source>
        <tissue>Cervix carcinoma</tissue>
    </source>
</reference>
<reference key="7">
    <citation type="journal article" date="2013" name="J. Proteome Res.">
        <title>Toward a comprehensive characterization of a human cancer cell phosphoproteome.</title>
        <authorList>
            <person name="Zhou H."/>
            <person name="Di Palma S."/>
            <person name="Preisinger C."/>
            <person name="Peng M."/>
            <person name="Polat A.N."/>
            <person name="Heck A.J."/>
            <person name="Mohammed S."/>
        </authorList>
    </citation>
    <scope>PHOSPHORYLATION [LARGE SCALE ANALYSIS] AT SER-745</scope>
    <scope>IDENTIFICATION BY MASS SPECTROMETRY [LARGE SCALE ANALYSIS]</scope>
    <source>
        <tissue>Erythroleukemia</tissue>
    </source>
</reference>
<reference key="8">
    <citation type="journal article" date="2014" name="Am. J. Hum. Genet.">
        <title>Mutations in CKAP2L, the human homolog of the mouse Radmis gene, cause Filippi syndrome.</title>
        <authorList>
            <person name="Hussain M.S."/>
            <person name="Battaglia A."/>
            <person name="Szczepanski S."/>
            <person name="Kaygusuz E."/>
            <person name="Toliat M.R."/>
            <person name="Sakakibara S."/>
            <person name="Altmueller J."/>
            <person name="Thiele H."/>
            <person name="Nuernberg G."/>
            <person name="Moosa S."/>
            <person name="Yigit G."/>
            <person name="Beleggia F."/>
            <person name="Tinschert S."/>
            <person name="Clayton-Smith J."/>
            <person name="Vasudevan P."/>
            <person name="Urquhart J.E."/>
            <person name="Donnai D."/>
            <person name="Fryer A."/>
            <person name="Percin F."/>
            <person name="Brancati F."/>
            <person name="Dobbie A."/>
            <person name="Smigiel R."/>
            <person name="Gillessen-Kaesbach G."/>
            <person name="Wollnik B."/>
            <person name="Noegel A.A."/>
            <person name="Newman W.G."/>
            <person name="Nuernberg P."/>
        </authorList>
    </citation>
    <scope>INVOLVEMENT IN FLPIS</scope>
    <scope>FUNCTION</scope>
    <scope>SUBCELLULAR LOCATION</scope>
    <scope>INDUCTION</scope>
</reference>
<reference key="9">
    <citation type="journal article" date="2017" name="Nat. Struct. Mol. Biol.">
        <title>Site-specific mapping of the human SUMO proteome reveals co-modification with phosphorylation.</title>
        <authorList>
            <person name="Hendriks I.A."/>
            <person name="Lyon D."/>
            <person name="Young C."/>
            <person name="Jensen L.J."/>
            <person name="Vertegaal A.C."/>
            <person name="Nielsen M.L."/>
        </authorList>
    </citation>
    <scope>SUMOYLATION [LARGE SCALE ANALYSIS] AT LYS-198</scope>
    <scope>IDENTIFICATION BY MASS SPECTROMETRY [LARGE SCALE ANALYSIS]</scope>
</reference>
<evidence type="ECO:0000250" key="1"/>
<evidence type="ECO:0000256" key="2">
    <source>
        <dbReference type="SAM" id="MobiDB-lite"/>
    </source>
</evidence>
<evidence type="ECO:0000269" key="3">
    <source>
    </source>
</evidence>
<evidence type="ECO:0000269" key="4">
    <source>
    </source>
</evidence>
<evidence type="ECO:0000269" key="5">
    <source>
    </source>
</evidence>
<evidence type="ECO:0000269" key="6">
    <source>
    </source>
</evidence>
<evidence type="ECO:0000269" key="7">
    <source>
    </source>
</evidence>
<evidence type="ECO:0000303" key="8">
    <source>
    </source>
</evidence>
<evidence type="ECO:0000305" key="9"/>
<evidence type="ECO:0007744" key="10">
    <source>
    </source>
</evidence>
<evidence type="ECO:0007744" key="11">
    <source>
    </source>
</evidence>
<evidence type="ECO:0007744" key="12">
    <source>
    </source>
</evidence>
<evidence type="ECO:0007744" key="13">
    <source>
    </source>
</evidence>
<keyword id="KW-0025">Alternative splicing</keyword>
<keyword id="KW-0963">Cytoplasm</keyword>
<keyword id="KW-0206">Cytoskeleton</keyword>
<keyword id="KW-0991">Intellectual disability</keyword>
<keyword id="KW-1017">Isopeptide bond</keyword>
<keyword id="KW-0597">Phosphoprotein</keyword>
<keyword id="KW-1267">Proteomics identification</keyword>
<keyword id="KW-1185">Reference proteome</keyword>
<keyword id="KW-0832">Ubl conjugation</keyword>
<feature type="chain" id="PRO_0000324335" description="Cytoskeleton-associated protein 2-like">
    <location>
        <begin position="1"/>
        <end position="745"/>
    </location>
</feature>
<feature type="region of interest" description="Disordered" evidence="2">
    <location>
        <begin position="25"/>
        <end position="141"/>
    </location>
</feature>
<feature type="region of interest" description="Disordered" evidence="2">
    <location>
        <begin position="192"/>
        <end position="217"/>
    </location>
</feature>
<feature type="region of interest" description="Disordered" evidence="2">
    <location>
        <begin position="256"/>
        <end position="276"/>
    </location>
</feature>
<feature type="region of interest" description="Disordered" evidence="2">
    <location>
        <begin position="385"/>
        <end position="411"/>
    </location>
</feature>
<feature type="short sequence motif" description="KEN box" evidence="1">
    <location>
        <begin position="185"/>
        <end position="187"/>
    </location>
</feature>
<feature type="compositionally biased region" description="Polar residues" evidence="2">
    <location>
        <begin position="30"/>
        <end position="61"/>
    </location>
</feature>
<feature type="compositionally biased region" description="Low complexity" evidence="2">
    <location>
        <begin position="109"/>
        <end position="120"/>
    </location>
</feature>
<feature type="compositionally biased region" description="Polar residues" evidence="2">
    <location>
        <begin position="121"/>
        <end position="133"/>
    </location>
</feature>
<feature type="compositionally biased region" description="Basic and acidic residues" evidence="2">
    <location>
        <begin position="192"/>
        <end position="203"/>
    </location>
</feature>
<feature type="compositionally biased region" description="Polar residues" evidence="2">
    <location>
        <begin position="389"/>
        <end position="411"/>
    </location>
</feature>
<feature type="modified residue" description="Phosphotyrosine" evidence="6">
    <location>
        <position position="204"/>
    </location>
</feature>
<feature type="modified residue" description="Phosphothreonine" evidence="10">
    <location>
        <position position="742"/>
    </location>
</feature>
<feature type="modified residue" description="Phosphoserine" evidence="10 11 12">
    <location>
        <position position="745"/>
    </location>
</feature>
<feature type="cross-link" description="Glycyl lysine isopeptide (Lys-Gly) (interchain with G-Cter in SUMO1); alternate">
    <location>
        <position position="198"/>
    </location>
</feature>
<feature type="cross-link" description="Glycyl lysine isopeptide (Lys-Gly) (interchain with G-Cter in SUMO2); alternate" evidence="13">
    <location>
        <position position="198"/>
    </location>
</feature>
<feature type="splice variant" id="VSP_032219" description="In isoform 2." evidence="8">
    <location>
        <begin position="1"/>
        <end position="411"/>
    </location>
</feature>
<feature type="splice variant" id="VSP_053717" description="In isoform 3." evidence="8">
    <location>
        <begin position="1"/>
        <end position="165"/>
    </location>
</feature>
<feature type="splice variant" id="VSP_032220" description="In isoform 2." evidence="8">
    <original>Q</original>
    <variation>M</variation>
    <location>
        <position position="412"/>
    </location>
</feature>
<feature type="sequence variant" id="VAR_039735" description="In dbSNP:rs36093393.">
    <original>L</original>
    <variation>F</variation>
    <location>
        <position position="19"/>
    </location>
</feature>
<feature type="sequence variant" id="VAR_039736" description="In dbSNP:rs35593767.">
    <original>K</original>
    <variation>R</variation>
    <location>
        <position position="26"/>
    </location>
</feature>
<feature type="sequence variant" id="VAR_039737" description="In dbSNP:rs17042344." evidence="5">
    <original>N</original>
    <variation>S</variation>
    <location>
        <position position="62"/>
    </location>
</feature>
<feature type="sequence variant" id="VAR_039738" description="In dbSNP:rs13007595.">
    <original>T</original>
    <variation>I</variation>
    <location>
        <position position="104"/>
    </location>
</feature>
<feature type="sequence variant" id="VAR_039739" description="In dbSNP:rs17042341." evidence="5">
    <original>R</original>
    <variation>S</variation>
    <location>
        <position position="263"/>
    </location>
</feature>
<feature type="sequence variant" id="VAR_039740" description="In dbSNP:rs6731822." evidence="3 4">
    <original>I</original>
    <variation>V</variation>
    <location>
        <position position="375"/>
    </location>
</feature>
<feature type="sequence variant" id="VAR_039741" description="In dbSNP:rs2676126.">
    <original>P</original>
    <variation>A</variation>
    <location>
        <position position="379"/>
    </location>
</feature>
<feature type="sequence variant" id="VAR_039742" description="In dbSNP:rs36046436.">
    <original>S</original>
    <variation>G</variation>
    <location>
        <position position="519"/>
    </location>
</feature>
<feature type="sequence variant" id="VAR_039743" description="In dbSNP:rs3811040.">
    <original>L</original>
    <variation>S</variation>
    <location>
        <position position="614"/>
    </location>
</feature>
<feature type="sequence variant" id="VAR_039744" description="In dbSNP:rs3811039.">
    <original>E</original>
    <variation>D</variation>
    <location>
        <position position="706"/>
    </location>
</feature>
<feature type="mutagenesis site" description="Abrogates sumoylation." evidence="6">
    <original>K</original>
    <variation>R</variation>
    <location>
        <position position="198"/>
    </location>
</feature>
<feature type="sequence conflict" description="In Ref. 1; BAH14612." evidence="9" ref="1">
    <original>I</original>
    <variation>A</variation>
    <location>
        <position position="375"/>
    </location>
</feature>
<feature type="sequence conflict" description="In Ref. 1; BAC05202." evidence="9" ref="1">
    <original>L</original>
    <variation>P</variation>
    <location>
        <position position="531"/>
    </location>
</feature>
<feature type="sequence conflict" description="In Ref. 1; BAF85219." evidence="9" ref="1">
    <original>V</original>
    <variation>A</variation>
    <location>
        <position position="615"/>
    </location>
</feature>